<sequence length="505" mass="57575">MSEQNAQGADEVVDLNNEMKARREKLAALREQGIPFPNDFRRDRTSDQLHAEFDAKEAEELEALNIEVSVAGRMMTRRIMGKASFVTLQDVGGRIQLYVARDDLPEGVYNEQFKKWDLGDILGAKGKLFKTKTGELSIHCTELRLLTKALRPLPDKFHGLQDQEARYRQRYLDLISNDESRNTFKTRSKILAGIRQFMVARGFMEVETPMMQVIPGGASARPFITHHNALDLDMYLRIAPELYLKRLVVGGFERVFEINRNFRNEGISVRHNPEFTMMELYMAYADYKDLIELTESLFRTLAQDVLGTTQVPYGDEVFDFGKPFEKLTMREAIKKYRPETDMADLDNFDSAKAIAESIGIHVEKSWGLGRIVTEIFDEVAEAHLIQPTFITEYPAEVSPLARRNDVNPEITDRFEFFIGGREIGNGFSELNDAEDQAQRFLDQVNAKAAGDDEAMFYDEDYVTALEHGLPPTAGLGIGIDRMVMLFTNSHTIRDVILFPAMRPVK</sequence>
<organism>
    <name type="scientific">Salmonella dublin (strain CT_02021853)</name>
    <dbReference type="NCBI Taxonomy" id="439851"/>
    <lineage>
        <taxon>Bacteria</taxon>
        <taxon>Pseudomonadati</taxon>
        <taxon>Pseudomonadota</taxon>
        <taxon>Gammaproteobacteria</taxon>
        <taxon>Enterobacterales</taxon>
        <taxon>Enterobacteriaceae</taxon>
        <taxon>Salmonella</taxon>
    </lineage>
</organism>
<accession>B5FUF3</accession>
<comment type="catalytic activity">
    <reaction evidence="1">
        <text>tRNA(Lys) + L-lysine + ATP = L-lysyl-tRNA(Lys) + AMP + diphosphate</text>
        <dbReference type="Rhea" id="RHEA:20792"/>
        <dbReference type="Rhea" id="RHEA-COMP:9696"/>
        <dbReference type="Rhea" id="RHEA-COMP:9697"/>
        <dbReference type="ChEBI" id="CHEBI:30616"/>
        <dbReference type="ChEBI" id="CHEBI:32551"/>
        <dbReference type="ChEBI" id="CHEBI:33019"/>
        <dbReference type="ChEBI" id="CHEBI:78442"/>
        <dbReference type="ChEBI" id="CHEBI:78529"/>
        <dbReference type="ChEBI" id="CHEBI:456215"/>
        <dbReference type="EC" id="6.1.1.6"/>
    </reaction>
</comment>
<comment type="cofactor">
    <cofactor evidence="1">
        <name>Mg(2+)</name>
        <dbReference type="ChEBI" id="CHEBI:18420"/>
    </cofactor>
    <text evidence="1">Binds 3 Mg(2+) ions per subunit.</text>
</comment>
<comment type="subunit">
    <text evidence="1">Homodimer.</text>
</comment>
<comment type="subcellular location">
    <subcellularLocation>
        <location evidence="1">Cytoplasm</location>
    </subcellularLocation>
</comment>
<comment type="similarity">
    <text evidence="1">Belongs to the class-II aminoacyl-tRNA synthetase family.</text>
</comment>
<proteinExistence type="inferred from homology"/>
<dbReference type="EC" id="6.1.1.6" evidence="1"/>
<dbReference type="EMBL" id="CP001144">
    <property type="protein sequence ID" value="ACH74322.1"/>
    <property type="molecule type" value="Genomic_DNA"/>
</dbReference>
<dbReference type="RefSeq" id="WP_000003339.1">
    <property type="nucleotide sequence ID" value="NC_011205.1"/>
</dbReference>
<dbReference type="SMR" id="B5FUF3"/>
<dbReference type="KEGG" id="sed:SeD_A3376"/>
<dbReference type="HOGENOM" id="CLU_008255_6_0_6"/>
<dbReference type="Proteomes" id="UP000008322">
    <property type="component" value="Chromosome"/>
</dbReference>
<dbReference type="GO" id="GO:0005829">
    <property type="term" value="C:cytosol"/>
    <property type="evidence" value="ECO:0007669"/>
    <property type="project" value="TreeGrafter"/>
</dbReference>
<dbReference type="GO" id="GO:0005524">
    <property type="term" value="F:ATP binding"/>
    <property type="evidence" value="ECO:0007669"/>
    <property type="project" value="UniProtKB-UniRule"/>
</dbReference>
<dbReference type="GO" id="GO:0004824">
    <property type="term" value="F:lysine-tRNA ligase activity"/>
    <property type="evidence" value="ECO:0007669"/>
    <property type="project" value="UniProtKB-UniRule"/>
</dbReference>
<dbReference type="GO" id="GO:0000287">
    <property type="term" value="F:magnesium ion binding"/>
    <property type="evidence" value="ECO:0007669"/>
    <property type="project" value="UniProtKB-UniRule"/>
</dbReference>
<dbReference type="GO" id="GO:0000049">
    <property type="term" value="F:tRNA binding"/>
    <property type="evidence" value="ECO:0007669"/>
    <property type="project" value="TreeGrafter"/>
</dbReference>
<dbReference type="GO" id="GO:0006430">
    <property type="term" value="P:lysyl-tRNA aminoacylation"/>
    <property type="evidence" value="ECO:0007669"/>
    <property type="project" value="UniProtKB-UniRule"/>
</dbReference>
<dbReference type="CDD" id="cd00775">
    <property type="entry name" value="LysRS_core"/>
    <property type="match status" value="1"/>
</dbReference>
<dbReference type="CDD" id="cd04322">
    <property type="entry name" value="LysRS_N"/>
    <property type="match status" value="1"/>
</dbReference>
<dbReference type="FunFam" id="2.40.50.140:FF:000024">
    <property type="entry name" value="Lysine--tRNA ligase"/>
    <property type="match status" value="1"/>
</dbReference>
<dbReference type="FunFam" id="3.30.930.10:FF:000001">
    <property type="entry name" value="Lysine--tRNA ligase"/>
    <property type="match status" value="1"/>
</dbReference>
<dbReference type="Gene3D" id="3.30.930.10">
    <property type="entry name" value="Bira Bifunctional Protein, Domain 2"/>
    <property type="match status" value="1"/>
</dbReference>
<dbReference type="Gene3D" id="2.40.50.140">
    <property type="entry name" value="Nucleic acid-binding proteins"/>
    <property type="match status" value="1"/>
</dbReference>
<dbReference type="HAMAP" id="MF_00252">
    <property type="entry name" value="Lys_tRNA_synth_class2"/>
    <property type="match status" value="1"/>
</dbReference>
<dbReference type="InterPro" id="IPR004364">
    <property type="entry name" value="Aa-tRNA-synt_II"/>
</dbReference>
<dbReference type="InterPro" id="IPR006195">
    <property type="entry name" value="aa-tRNA-synth_II"/>
</dbReference>
<dbReference type="InterPro" id="IPR045864">
    <property type="entry name" value="aa-tRNA-synth_II/BPL/LPL"/>
</dbReference>
<dbReference type="InterPro" id="IPR002313">
    <property type="entry name" value="Lys-tRNA-ligase_II"/>
</dbReference>
<dbReference type="InterPro" id="IPR034762">
    <property type="entry name" value="Lys-tRNA-ligase_II_bac/euk"/>
</dbReference>
<dbReference type="InterPro" id="IPR044136">
    <property type="entry name" value="Lys-tRNA-ligase_II_N"/>
</dbReference>
<dbReference type="InterPro" id="IPR018149">
    <property type="entry name" value="Lys-tRNA-synth_II_C"/>
</dbReference>
<dbReference type="InterPro" id="IPR012340">
    <property type="entry name" value="NA-bd_OB-fold"/>
</dbReference>
<dbReference type="InterPro" id="IPR004365">
    <property type="entry name" value="NA-bd_OB_tRNA"/>
</dbReference>
<dbReference type="NCBIfam" id="TIGR00499">
    <property type="entry name" value="lysS_bact"/>
    <property type="match status" value="1"/>
</dbReference>
<dbReference type="NCBIfam" id="NF001756">
    <property type="entry name" value="PRK00484.1"/>
    <property type="match status" value="1"/>
</dbReference>
<dbReference type="NCBIfam" id="NF009101">
    <property type="entry name" value="PRK12445.1"/>
    <property type="match status" value="1"/>
</dbReference>
<dbReference type="PANTHER" id="PTHR42918:SF15">
    <property type="entry name" value="LYSINE--TRNA LIGASE, CHLOROPLASTIC_MITOCHONDRIAL"/>
    <property type="match status" value="1"/>
</dbReference>
<dbReference type="PANTHER" id="PTHR42918">
    <property type="entry name" value="LYSYL-TRNA SYNTHETASE"/>
    <property type="match status" value="1"/>
</dbReference>
<dbReference type="Pfam" id="PF00152">
    <property type="entry name" value="tRNA-synt_2"/>
    <property type="match status" value="1"/>
</dbReference>
<dbReference type="Pfam" id="PF01336">
    <property type="entry name" value="tRNA_anti-codon"/>
    <property type="match status" value="1"/>
</dbReference>
<dbReference type="PIRSF" id="PIRSF039101">
    <property type="entry name" value="LysRS2"/>
    <property type="match status" value="1"/>
</dbReference>
<dbReference type="PRINTS" id="PR00982">
    <property type="entry name" value="TRNASYNTHLYS"/>
</dbReference>
<dbReference type="SUPFAM" id="SSF55681">
    <property type="entry name" value="Class II aaRS and biotin synthetases"/>
    <property type="match status" value="1"/>
</dbReference>
<dbReference type="SUPFAM" id="SSF50249">
    <property type="entry name" value="Nucleic acid-binding proteins"/>
    <property type="match status" value="1"/>
</dbReference>
<dbReference type="PROSITE" id="PS50862">
    <property type="entry name" value="AA_TRNA_LIGASE_II"/>
    <property type="match status" value="1"/>
</dbReference>
<keyword id="KW-0030">Aminoacyl-tRNA synthetase</keyword>
<keyword id="KW-0067">ATP-binding</keyword>
<keyword id="KW-0963">Cytoplasm</keyword>
<keyword id="KW-0436">Ligase</keyword>
<keyword id="KW-0460">Magnesium</keyword>
<keyword id="KW-0479">Metal-binding</keyword>
<keyword id="KW-0547">Nucleotide-binding</keyword>
<keyword id="KW-0648">Protein biosynthesis</keyword>
<reference key="1">
    <citation type="journal article" date="2011" name="J. Bacteriol.">
        <title>Comparative genomics of 28 Salmonella enterica isolates: evidence for CRISPR-mediated adaptive sublineage evolution.</title>
        <authorList>
            <person name="Fricke W.F."/>
            <person name="Mammel M.K."/>
            <person name="McDermott P.F."/>
            <person name="Tartera C."/>
            <person name="White D.G."/>
            <person name="Leclerc J.E."/>
            <person name="Ravel J."/>
            <person name="Cebula T.A."/>
        </authorList>
    </citation>
    <scope>NUCLEOTIDE SEQUENCE [LARGE SCALE GENOMIC DNA]</scope>
    <source>
        <strain>CT_02021853</strain>
    </source>
</reference>
<evidence type="ECO:0000255" key="1">
    <source>
        <dbReference type="HAMAP-Rule" id="MF_00252"/>
    </source>
</evidence>
<name>SYK_SALDC</name>
<gene>
    <name evidence="1" type="primary">lysS</name>
    <name type="ordered locus">SeD_A3376</name>
</gene>
<feature type="chain" id="PRO_1000101141" description="Lysine--tRNA ligase">
    <location>
        <begin position="1"/>
        <end position="505"/>
    </location>
</feature>
<feature type="binding site" evidence="1">
    <location>
        <position position="415"/>
    </location>
    <ligand>
        <name>Mg(2+)</name>
        <dbReference type="ChEBI" id="CHEBI:18420"/>
        <label>1</label>
    </ligand>
</feature>
<feature type="binding site" evidence="1">
    <location>
        <position position="422"/>
    </location>
    <ligand>
        <name>Mg(2+)</name>
        <dbReference type="ChEBI" id="CHEBI:18420"/>
        <label>1</label>
    </ligand>
</feature>
<feature type="binding site" evidence="1">
    <location>
        <position position="422"/>
    </location>
    <ligand>
        <name>Mg(2+)</name>
        <dbReference type="ChEBI" id="CHEBI:18420"/>
        <label>2</label>
    </ligand>
</feature>
<protein>
    <recommendedName>
        <fullName evidence="1">Lysine--tRNA ligase</fullName>
        <ecNumber evidence="1">6.1.1.6</ecNumber>
    </recommendedName>
    <alternativeName>
        <fullName evidence="1">Lysyl-tRNA synthetase</fullName>
        <shortName evidence="1">LysRS</shortName>
    </alternativeName>
</protein>